<proteinExistence type="inferred from homology"/>
<gene>
    <name evidence="1" type="primary">infC</name>
    <name type="ordered locus">SPJ_0900</name>
</gene>
<comment type="function">
    <text evidence="1">IF-3 binds to the 30S ribosomal subunit and shifts the equilibrium between 70S ribosomes and their 50S and 30S subunits in favor of the free subunits, thus enhancing the availability of 30S subunits on which protein synthesis initiation begins.</text>
</comment>
<comment type="subunit">
    <text evidence="1">Monomer.</text>
</comment>
<comment type="subcellular location">
    <subcellularLocation>
        <location evidence="1">Cytoplasm</location>
    </subcellularLocation>
</comment>
<comment type="similarity">
    <text evidence="1">Belongs to the IF-3 family.</text>
</comment>
<protein>
    <recommendedName>
        <fullName evidence="1">Translation initiation factor IF-3</fullName>
    </recommendedName>
</protein>
<sequence length="185" mass="21165">MFFSNKTKEVKTIAKQDLFINDEIRVREVRLIGLEGEQLGIKPLSEAQALADNANVDLVLIQPQAKPPVAKIMDYGKFKFEYQKKQKEQRKKQSVVTVKEVRLSPTIDKGDFDTKLRNARKFLEKGNKVKVSIRFKGRMITHKEIGAKVLAEFAEATQDIAIIEQRAKMDGRQMFMQLAPATDKK</sequence>
<keyword id="KW-0963">Cytoplasm</keyword>
<keyword id="KW-0396">Initiation factor</keyword>
<keyword id="KW-0648">Protein biosynthesis</keyword>
<reference key="1">
    <citation type="journal article" date="2010" name="Genome Biol.">
        <title>Structure and dynamics of the pan-genome of Streptococcus pneumoniae and closely related species.</title>
        <authorList>
            <person name="Donati C."/>
            <person name="Hiller N.L."/>
            <person name="Tettelin H."/>
            <person name="Muzzi A."/>
            <person name="Croucher N.J."/>
            <person name="Angiuoli S.V."/>
            <person name="Oggioni M."/>
            <person name="Dunning Hotopp J.C."/>
            <person name="Hu F.Z."/>
            <person name="Riley D.R."/>
            <person name="Covacci A."/>
            <person name="Mitchell T.J."/>
            <person name="Bentley S.D."/>
            <person name="Kilian M."/>
            <person name="Ehrlich G.D."/>
            <person name="Rappuoli R."/>
            <person name="Moxon E.R."/>
            <person name="Masignani V."/>
        </authorList>
    </citation>
    <scope>NUCLEOTIDE SEQUENCE [LARGE SCALE GENOMIC DNA]</scope>
    <source>
        <strain>JJA</strain>
    </source>
</reference>
<organism>
    <name type="scientific">Streptococcus pneumoniae (strain JJA)</name>
    <dbReference type="NCBI Taxonomy" id="488222"/>
    <lineage>
        <taxon>Bacteria</taxon>
        <taxon>Bacillati</taxon>
        <taxon>Bacillota</taxon>
        <taxon>Bacilli</taxon>
        <taxon>Lactobacillales</taxon>
        <taxon>Streptococcaceae</taxon>
        <taxon>Streptococcus</taxon>
    </lineage>
</organism>
<name>IF3_STRZJ</name>
<dbReference type="EMBL" id="CP000919">
    <property type="protein sequence ID" value="ACO18406.1"/>
    <property type="molecule type" value="Genomic_DNA"/>
</dbReference>
<dbReference type="SMR" id="C1CDV4"/>
<dbReference type="KEGG" id="sjj:SPJ_0900"/>
<dbReference type="HOGENOM" id="CLU_054919_3_2_9"/>
<dbReference type="Proteomes" id="UP000002206">
    <property type="component" value="Chromosome"/>
</dbReference>
<dbReference type="GO" id="GO:0005829">
    <property type="term" value="C:cytosol"/>
    <property type="evidence" value="ECO:0007669"/>
    <property type="project" value="TreeGrafter"/>
</dbReference>
<dbReference type="GO" id="GO:0016020">
    <property type="term" value="C:membrane"/>
    <property type="evidence" value="ECO:0007669"/>
    <property type="project" value="TreeGrafter"/>
</dbReference>
<dbReference type="GO" id="GO:0043022">
    <property type="term" value="F:ribosome binding"/>
    <property type="evidence" value="ECO:0007669"/>
    <property type="project" value="TreeGrafter"/>
</dbReference>
<dbReference type="GO" id="GO:0003743">
    <property type="term" value="F:translation initiation factor activity"/>
    <property type="evidence" value="ECO:0007669"/>
    <property type="project" value="UniProtKB-UniRule"/>
</dbReference>
<dbReference type="GO" id="GO:0032790">
    <property type="term" value="P:ribosome disassembly"/>
    <property type="evidence" value="ECO:0007669"/>
    <property type="project" value="TreeGrafter"/>
</dbReference>
<dbReference type="FunFam" id="3.10.20.80:FF:000001">
    <property type="entry name" value="Translation initiation factor IF-3"/>
    <property type="match status" value="1"/>
</dbReference>
<dbReference type="FunFam" id="3.30.110.10:FF:000001">
    <property type="entry name" value="Translation initiation factor IF-3"/>
    <property type="match status" value="1"/>
</dbReference>
<dbReference type="Gene3D" id="3.30.110.10">
    <property type="entry name" value="Translation initiation factor 3 (IF-3), C-terminal domain"/>
    <property type="match status" value="1"/>
</dbReference>
<dbReference type="Gene3D" id="3.10.20.80">
    <property type="entry name" value="Translation initiation factor 3 (IF-3), N-terminal domain"/>
    <property type="match status" value="1"/>
</dbReference>
<dbReference type="HAMAP" id="MF_00080">
    <property type="entry name" value="IF_3"/>
    <property type="match status" value="1"/>
</dbReference>
<dbReference type="InterPro" id="IPR036788">
    <property type="entry name" value="T_IF-3_C_sf"/>
</dbReference>
<dbReference type="InterPro" id="IPR036787">
    <property type="entry name" value="T_IF-3_N_sf"/>
</dbReference>
<dbReference type="InterPro" id="IPR019813">
    <property type="entry name" value="Translation_initiation_fac3_CS"/>
</dbReference>
<dbReference type="InterPro" id="IPR001288">
    <property type="entry name" value="Translation_initiation_fac_3"/>
</dbReference>
<dbReference type="InterPro" id="IPR019815">
    <property type="entry name" value="Translation_initiation_fac_3_C"/>
</dbReference>
<dbReference type="InterPro" id="IPR019814">
    <property type="entry name" value="Translation_initiation_fac_3_N"/>
</dbReference>
<dbReference type="NCBIfam" id="TIGR00168">
    <property type="entry name" value="infC"/>
    <property type="match status" value="1"/>
</dbReference>
<dbReference type="PANTHER" id="PTHR10938">
    <property type="entry name" value="TRANSLATION INITIATION FACTOR IF-3"/>
    <property type="match status" value="1"/>
</dbReference>
<dbReference type="PANTHER" id="PTHR10938:SF0">
    <property type="entry name" value="TRANSLATION INITIATION FACTOR IF-3, MITOCHONDRIAL"/>
    <property type="match status" value="1"/>
</dbReference>
<dbReference type="Pfam" id="PF00707">
    <property type="entry name" value="IF3_C"/>
    <property type="match status" value="1"/>
</dbReference>
<dbReference type="Pfam" id="PF05198">
    <property type="entry name" value="IF3_N"/>
    <property type="match status" value="1"/>
</dbReference>
<dbReference type="SUPFAM" id="SSF55200">
    <property type="entry name" value="Translation initiation factor IF3, C-terminal domain"/>
    <property type="match status" value="1"/>
</dbReference>
<dbReference type="SUPFAM" id="SSF54364">
    <property type="entry name" value="Translation initiation factor IF3, N-terminal domain"/>
    <property type="match status" value="1"/>
</dbReference>
<dbReference type="PROSITE" id="PS00938">
    <property type="entry name" value="IF3"/>
    <property type="match status" value="1"/>
</dbReference>
<feature type="chain" id="PRO_1000190846" description="Translation initiation factor IF-3">
    <location>
        <begin position="1"/>
        <end position="185"/>
    </location>
</feature>
<evidence type="ECO:0000255" key="1">
    <source>
        <dbReference type="HAMAP-Rule" id="MF_00080"/>
    </source>
</evidence>
<accession>C1CDV4</accession>